<dbReference type="EC" id="1.8.4.-"/>
<dbReference type="EMBL" id="BC160591">
    <property type="protein sequence ID" value="AAI60591.1"/>
    <property type="molecule type" value="mRNA"/>
</dbReference>
<dbReference type="EMBL" id="BC170922">
    <property type="protein sequence ID" value="AAI70922.1"/>
    <property type="molecule type" value="mRNA"/>
</dbReference>
<dbReference type="EMBL" id="BC170928">
    <property type="protein sequence ID" value="AAI70928.1"/>
    <property type="molecule type" value="mRNA"/>
</dbReference>
<dbReference type="RefSeq" id="NP_001016058.1">
    <property type="nucleotide sequence ID" value="NM_001016058.2"/>
</dbReference>
<dbReference type="SMR" id="B1H1F9"/>
<dbReference type="FunCoup" id="B1H1F9">
    <property type="interactions" value="2213"/>
</dbReference>
<dbReference type="STRING" id="8364.ENSXETP00000014436"/>
<dbReference type="GlyCosmos" id="B1H1F9">
    <property type="glycosylation" value="3 sites, No reported glycans"/>
</dbReference>
<dbReference type="PaxDb" id="8364-ENSXETP00000061870"/>
<dbReference type="GeneID" id="548812"/>
<dbReference type="KEGG" id="xtr:548812"/>
<dbReference type="AGR" id="Xenbase:XB-GENE-978124"/>
<dbReference type="CTD" id="30001"/>
<dbReference type="Xenbase" id="XB-GENE-978124">
    <property type="gene designation" value="ero1a"/>
</dbReference>
<dbReference type="eggNOG" id="KOG2608">
    <property type="taxonomic scope" value="Eukaryota"/>
</dbReference>
<dbReference type="InParanoid" id="B1H1F9"/>
<dbReference type="OMA" id="PCGIRSE"/>
<dbReference type="OrthoDB" id="269384at2759"/>
<dbReference type="Reactome" id="R-XTR-3299685">
    <property type="pathway name" value="Detoxification of Reactive Oxygen Species"/>
</dbReference>
<dbReference type="Proteomes" id="UP000008143">
    <property type="component" value="Chromosome 8"/>
</dbReference>
<dbReference type="GO" id="GO:0005789">
    <property type="term" value="C:endoplasmic reticulum membrane"/>
    <property type="evidence" value="ECO:0007669"/>
    <property type="project" value="UniProtKB-SubCell"/>
</dbReference>
<dbReference type="GO" id="GO:0071949">
    <property type="term" value="F:FAD binding"/>
    <property type="evidence" value="ECO:0007669"/>
    <property type="project" value="InterPro"/>
</dbReference>
<dbReference type="GO" id="GO:0015035">
    <property type="term" value="F:protein-disulfide reductase activity"/>
    <property type="evidence" value="ECO:0007669"/>
    <property type="project" value="InterPro"/>
</dbReference>
<dbReference type="GO" id="GO:0016972">
    <property type="term" value="F:thiol oxidase activity"/>
    <property type="evidence" value="ECO:0007669"/>
    <property type="project" value="InterPro"/>
</dbReference>
<dbReference type="GO" id="GO:0034975">
    <property type="term" value="P:protein folding in endoplasmic reticulum"/>
    <property type="evidence" value="ECO:0007669"/>
    <property type="project" value="InterPro"/>
</dbReference>
<dbReference type="InterPro" id="IPR007266">
    <property type="entry name" value="Ero1"/>
</dbReference>
<dbReference type="InterPro" id="IPR037192">
    <property type="entry name" value="ERO1-like_sf"/>
</dbReference>
<dbReference type="PANTHER" id="PTHR12613:SF1">
    <property type="entry name" value="ERO1-LIKE PROTEIN ALPHA"/>
    <property type="match status" value="1"/>
</dbReference>
<dbReference type="PANTHER" id="PTHR12613">
    <property type="entry name" value="ERO1-RELATED"/>
    <property type="match status" value="1"/>
</dbReference>
<dbReference type="Pfam" id="PF04137">
    <property type="entry name" value="ERO1"/>
    <property type="match status" value="1"/>
</dbReference>
<dbReference type="PIRSF" id="PIRSF017205">
    <property type="entry name" value="ERO1"/>
    <property type="match status" value="1"/>
</dbReference>
<dbReference type="SUPFAM" id="SSF110019">
    <property type="entry name" value="ERO1-like"/>
    <property type="match status" value="1"/>
</dbReference>
<gene>
    <name evidence="2" type="primary">ero1a</name>
    <name type="synonym">ero1l</name>
    <name type="synonym">ero1lb</name>
</gene>
<reference key="1">
    <citation type="submission" date="2008-11" db="EMBL/GenBank/DDBJ databases">
        <authorList>
            <consortium name="NIH - Xenopus Gene Collection (XGC) project"/>
        </authorList>
    </citation>
    <scope>NUCLEOTIDE SEQUENCE [LARGE SCALE MRNA]</scope>
    <source>
        <strain>N6</strain>
        <tissue>Neurula</tissue>
        <tissue>Ovary</tissue>
    </source>
</reference>
<organism>
    <name type="scientific">Xenopus tropicalis</name>
    <name type="common">Western clawed frog</name>
    <name type="synonym">Silurana tropicalis</name>
    <dbReference type="NCBI Taxonomy" id="8364"/>
    <lineage>
        <taxon>Eukaryota</taxon>
        <taxon>Metazoa</taxon>
        <taxon>Chordata</taxon>
        <taxon>Craniata</taxon>
        <taxon>Vertebrata</taxon>
        <taxon>Euteleostomi</taxon>
        <taxon>Amphibia</taxon>
        <taxon>Batrachia</taxon>
        <taxon>Anura</taxon>
        <taxon>Pipoidea</taxon>
        <taxon>Pipidae</taxon>
        <taxon>Xenopodinae</taxon>
        <taxon>Xenopus</taxon>
        <taxon>Silurana</taxon>
    </lineage>
</organism>
<sequence length="474" mass="54721">MVSGCCRLDMSSYVSVLVLCSLLLWGSNSQQEQSSAAQRCFCQVTGYLDDCTCDVETIDHFNNYGLFPKLQQLVASDYFRYYKANLKKPCPFWEDNSHCGVKDCAVKPCPTDEVPGLKPPGFKYTEEANRAHEEIDDCEKEKRLSAVDESLSVEAQEAMLKWNRHDDSADNFCELDDEESPDAEYVDLLKNPERYTGYKGADTWRIWNSIYEENCFKPKAVQRPLNPLTSTRGENEGKVFYNWLDGLCVEKRAFYRLISGLHASINIHLCANYLLKDTWMDKIWGHNTAEFQKRFDATLTQGEGPKRLKNLYFIYLIELRAISKVLPFFERSSFLLYTGNETKDTETKKLLLDVLLDARDFPLHFDENSLFSGDKKEAAKLKEDFRQHFRNISKIMDCVGCFKCRLWGKLQTQGLGTALKILFSERQIENLSESNQPSEFHLTRQEIVALFNAFARISTSVKELENFRTLLEKV</sequence>
<name>ERO1A_XENTR</name>
<comment type="function">
    <text evidence="1">Oxidoreductase involved in disulfide bond formation in the endoplasmic reticulum. Efficiently reoxidizes P4HB/PDI, the enzyme catalyzing protein disulfide formation, in order to allow P4HB to sustain additional rounds of disulfide formation. Following P4HB reoxidation, passes its electrons to molecular oxygen via FAD, leading to the production of reactive oxygen species (ROS) in the cell. Required for the folding of immunoglobulins (By similarity).</text>
</comment>
<comment type="cofactor">
    <cofactor evidence="2">
        <name>FAD</name>
        <dbReference type="ChEBI" id="CHEBI:57692"/>
    </cofactor>
</comment>
<comment type="activity regulation">
    <text evidence="1">Enzyme activity is tightly regulated to prevent the accumulation of reactive oxygen species in the endoplasmic reticulum. Reversibly down-regulated by the formation of disulfide bonds between the active site Cys-99 and Cys-138, and between Cys-104 and Cys-109. Glutathione may be required to regulate its activity in the endoplasmic reticulum (By similarity).</text>
</comment>
<comment type="subunit">
    <text evidence="1">Predominantly monomer. May function both as a monomer and a homodimer (By similarity).</text>
</comment>
<comment type="subcellular location">
    <subcellularLocation>
        <location evidence="1">Endoplasmic reticulum membrane</location>
        <topology evidence="1">Peripheral membrane protein</topology>
        <orientation evidence="1">Lumenal side</orientation>
    </subcellularLocation>
</comment>
<comment type="PTM">
    <text evidence="1">The Cys-99/Cys-104 and Cys-401/Cys-404 disulfide bonds constitute the redox-active center. The Cys-99/Cys-104 disulfide bond may accept electron from protein disulfide isomerase (PDI) and funnel them to the active site disulfide Cys-401/Cys-404 (By similarity).</text>
</comment>
<comment type="similarity">
    <text evidence="4">Belongs to the EROs family.</text>
</comment>
<feature type="signal peptide" evidence="3">
    <location>
        <begin position="1"/>
        <end position="29"/>
    </location>
</feature>
<feature type="chain" id="PRO_0000368277" description="ERO1-like protein alpha">
    <location>
        <begin position="30"/>
        <end position="474"/>
    </location>
</feature>
<feature type="binding site" evidence="2">
    <location>
        <position position="194"/>
    </location>
    <ligand>
        <name>FAD</name>
        <dbReference type="ChEBI" id="CHEBI:57692"/>
    </ligand>
</feature>
<feature type="binding site" evidence="2">
    <location>
        <position position="196"/>
    </location>
    <ligand>
        <name>FAD</name>
        <dbReference type="ChEBI" id="CHEBI:57692"/>
    </ligand>
</feature>
<feature type="binding site" evidence="2">
    <location>
        <position position="207"/>
    </location>
    <ligand>
        <name>FAD</name>
        <dbReference type="ChEBI" id="CHEBI:57692"/>
    </ligand>
</feature>
<feature type="binding site" evidence="2">
    <location>
        <position position="259"/>
    </location>
    <ligand>
        <name>FAD</name>
        <dbReference type="ChEBI" id="CHEBI:57692"/>
    </ligand>
</feature>
<feature type="binding site" evidence="2">
    <location>
        <position position="262"/>
    </location>
    <ligand>
        <name>FAD</name>
        <dbReference type="ChEBI" id="CHEBI:57692"/>
    </ligand>
</feature>
<feature type="binding site" evidence="2">
    <location>
        <position position="294"/>
    </location>
    <ligand>
        <name>FAD</name>
        <dbReference type="ChEBI" id="CHEBI:57692"/>
    </ligand>
</feature>
<feature type="binding site" evidence="2">
    <location>
        <position position="307"/>
    </location>
    <ligand>
        <name>FAD</name>
        <dbReference type="ChEBI" id="CHEBI:57692"/>
    </ligand>
</feature>
<feature type="glycosylation site" description="N-linked (GlcNAc...) asparagine" evidence="3">
    <location>
        <position position="340"/>
    </location>
</feature>
<feature type="glycosylation site" description="N-linked (GlcNAc...) asparagine" evidence="3">
    <location>
        <position position="391"/>
    </location>
</feature>
<feature type="glycosylation site" description="N-linked (GlcNAc...) asparagine" evidence="3">
    <location>
        <position position="430"/>
    </location>
</feature>
<feature type="disulfide bond" evidence="2">
    <location>
        <begin position="40"/>
        <end position="53"/>
    </location>
</feature>
<feature type="disulfide bond" evidence="2">
    <location>
        <begin position="42"/>
        <end position="51"/>
    </location>
</feature>
<feature type="disulfide bond" evidence="2">
    <location>
        <begin position="90"/>
        <end position="398"/>
    </location>
</feature>
<feature type="disulfide bond" description="Alternate" evidence="2">
    <location>
        <begin position="99"/>
        <end position="138"/>
    </location>
</feature>
<feature type="disulfide bond" description="Redox-active; alternate" evidence="2">
    <location>
        <begin position="99"/>
        <end position="104"/>
    </location>
</feature>
<feature type="disulfide bond" description="Alternate" evidence="2">
    <location>
        <begin position="104"/>
        <end position="109"/>
    </location>
</feature>
<feature type="disulfide bond" evidence="2">
    <location>
        <begin position="215"/>
        <end position="248"/>
    </location>
</feature>
<feature type="disulfide bond" description="Redox-active" evidence="2">
    <location>
        <begin position="401"/>
        <end position="404"/>
    </location>
</feature>
<keyword id="KW-1015">Disulfide bond</keyword>
<keyword id="KW-0249">Electron transport</keyword>
<keyword id="KW-0256">Endoplasmic reticulum</keyword>
<keyword id="KW-0274">FAD</keyword>
<keyword id="KW-0285">Flavoprotein</keyword>
<keyword id="KW-0325">Glycoprotein</keyword>
<keyword id="KW-0472">Membrane</keyword>
<keyword id="KW-0560">Oxidoreductase</keyword>
<keyword id="KW-0676">Redox-active center</keyword>
<keyword id="KW-1185">Reference proteome</keyword>
<keyword id="KW-0732">Signal</keyword>
<keyword id="KW-0813">Transport</keyword>
<proteinExistence type="evidence at transcript level"/>
<evidence type="ECO:0000250" key="1"/>
<evidence type="ECO:0000250" key="2">
    <source>
        <dbReference type="UniProtKB" id="Q96HE7"/>
    </source>
</evidence>
<evidence type="ECO:0000255" key="3"/>
<evidence type="ECO:0000305" key="4"/>
<protein>
    <recommendedName>
        <fullName>ERO1-like protein alpha</fullName>
        <shortName>ERO1-L</shortName>
        <shortName>ERO1-L-alpha</shortName>
        <ecNumber>1.8.4.-</ecNumber>
    </recommendedName>
    <alternativeName>
        <fullName evidence="2">Endoplasmic reticulum oxidoreductase alpha</fullName>
    </alternativeName>
    <alternativeName>
        <fullName>Endoplasmic reticulum oxidoreductin-1-like protein</fullName>
    </alternativeName>
    <alternativeName>
        <fullName>Oxidoreductin-1-L-alpha</fullName>
    </alternativeName>
</protein>
<accession>B1H1F9</accession>